<feature type="chain" id="PRO_1000018536" description="Indole-3-glycerol phosphate synthase">
    <location>
        <begin position="1"/>
        <end position="278"/>
    </location>
</feature>
<comment type="catalytic activity">
    <reaction evidence="1">
        <text>1-(2-carboxyphenylamino)-1-deoxy-D-ribulose 5-phosphate + H(+) = (1S,2R)-1-C-(indol-3-yl)glycerol 3-phosphate + CO2 + H2O</text>
        <dbReference type="Rhea" id="RHEA:23476"/>
        <dbReference type="ChEBI" id="CHEBI:15377"/>
        <dbReference type="ChEBI" id="CHEBI:15378"/>
        <dbReference type="ChEBI" id="CHEBI:16526"/>
        <dbReference type="ChEBI" id="CHEBI:58613"/>
        <dbReference type="ChEBI" id="CHEBI:58866"/>
        <dbReference type="EC" id="4.1.1.48"/>
    </reaction>
</comment>
<comment type="pathway">
    <text evidence="1">Amino-acid biosynthesis; L-tryptophan biosynthesis; L-tryptophan from chorismate: step 4/5.</text>
</comment>
<comment type="similarity">
    <text evidence="1">Belongs to the TrpC family.</text>
</comment>
<proteinExistence type="inferred from homology"/>
<name>TRPC_PSEPF</name>
<protein>
    <recommendedName>
        <fullName evidence="1">Indole-3-glycerol phosphate synthase</fullName>
        <shortName evidence="1">IGPS</shortName>
        <ecNumber evidence="1">4.1.1.48</ecNumber>
    </recommendedName>
</protein>
<keyword id="KW-0028">Amino-acid biosynthesis</keyword>
<keyword id="KW-0057">Aromatic amino acid biosynthesis</keyword>
<keyword id="KW-0210">Decarboxylase</keyword>
<keyword id="KW-0456">Lyase</keyword>
<keyword id="KW-0822">Tryptophan biosynthesis</keyword>
<organism>
    <name type="scientific">Pseudomonas fluorescens (strain Pf0-1)</name>
    <dbReference type="NCBI Taxonomy" id="205922"/>
    <lineage>
        <taxon>Bacteria</taxon>
        <taxon>Pseudomonadati</taxon>
        <taxon>Pseudomonadota</taxon>
        <taxon>Gammaproteobacteria</taxon>
        <taxon>Pseudomonadales</taxon>
        <taxon>Pseudomonadaceae</taxon>
        <taxon>Pseudomonas</taxon>
    </lineage>
</organism>
<dbReference type="EC" id="4.1.1.48" evidence="1"/>
<dbReference type="EMBL" id="CP000094">
    <property type="protein sequence ID" value="ABA76850.1"/>
    <property type="molecule type" value="Genomic_DNA"/>
</dbReference>
<dbReference type="RefSeq" id="WP_011336192.1">
    <property type="nucleotide sequence ID" value="NC_007492.2"/>
</dbReference>
<dbReference type="SMR" id="Q3K5V4"/>
<dbReference type="KEGG" id="pfo:Pfl01_5113"/>
<dbReference type="eggNOG" id="COG0134">
    <property type="taxonomic scope" value="Bacteria"/>
</dbReference>
<dbReference type="HOGENOM" id="CLU_034247_2_0_6"/>
<dbReference type="UniPathway" id="UPA00035">
    <property type="reaction ID" value="UER00043"/>
</dbReference>
<dbReference type="Proteomes" id="UP000002704">
    <property type="component" value="Chromosome"/>
</dbReference>
<dbReference type="GO" id="GO:0004425">
    <property type="term" value="F:indole-3-glycerol-phosphate synthase activity"/>
    <property type="evidence" value="ECO:0007669"/>
    <property type="project" value="UniProtKB-UniRule"/>
</dbReference>
<dbReference type="GO" id="GO:0004640">
    <property type="term" value="F:phosphoribosylanthranilate isomerase activity"/>
    <property type="evidence" value="ECO:0007669"/>
    <property type="project" value="TreeGrafter"/>
</dbReference>
<dbReference type="GO" id="GO:0000162">
    <property type="term" value="P:L-tryptophan biosynthetic process"/>
    <property type="evidence" value="ECO:0007669"/>
    <property type="project" value="UniProtKB-UniRule"/>
</dbReference>
<dbReference type="CDD" id="cd00331">
    <property type="entry name" value="IGPS"/>
    <property type="match status" value="1"/>
</dbReference>
<dbReference type="FunFam" id="3.20.20.70:FF:000024">
    <property type="entry name" value="Indole-3-glycerol phosphate synthase"/>
    <property type="match status" value="1"/>
</dbReference>
<dbReference type="Gene3D" id="3.20.20.70">
    <property type="entry name" value="Aldolase class I"/>
    <property type="match status" value="1"/>
</dbReference>
<dbReference type="HAMAP" id="MF_00134_B">
    <property type="entry name" value="IGPS_B"/>
    <property type="match status" value="1"/>
</dbReference>
<dbReference type="InterPro" id="IPR013785">
    <property type="entry name" value="Aldolase_TIM"/>
</dbReference>
<dbReference type="InterPro" id="IPR045186">
    <property type="entry name" value="Indole-3-glycerol_P_synth"/>
</dbReference>
<dbReference type="InterPro" id="IPR013798">
    <property type="entry name" value="Indole-3-glycerol_P_synth_dom"/>
</dbReference>
<dbReference type="InterPro" id="IPR001468">
    <property type="entry name" value="Indole-3-GlycerolPSynthase_CS"/>
</dbReference>
<dbReference type="InterPro" id="IPR011060">
    <property type="entry name" value="RibuloseP-bd_barrel"/>
</dbReference>
<dbReference type="NCBIfam" id="NF001370">
    <property type="entry name" value="PRK00278.1-2"/>
    <property type="match status" value="1"/>
</dbReference>
<dbReference type="NCBIfam" id="NF001373">
    <property type="entry name" value="PRK00278.1-6"/>
    <property type="match status" value="1"/>
</dbReference>
<dbReference type="NCBIfam" id="NF001377">
    <property type="entry name" value="PRK00278.2-4"/>
    <property type="match status" value="1"/>
</dbReference>
<dbReference type="PANTHER" id="PTHR22854:SF2">
    <property type="entry name" value="INDOLE-3-GLYCEROL-PHOSPHATE SYNTHASE"/>
    <property type="match status" value="1"/>
</dbReference>
<dbReference type="PANTHER" id="PTHR22854">
    <property type="entry name" value="TRYPTOPHAN BIOSYNTHESIS PROTEIN"/>
    <property type="match status" value="1"/>
</dbReference>
<dbReference type="Pfam" id="PF00218">
    <property type="entry name" value="IGPS"/>
    <property type="match status" value="1"/>
</dbReference>
<dbReference type="SUPFAM" id="SSF51366">
    <property type="entry name" value="Ribulose-phoshate binding barrel"/>
    <property type="match status" value="1"/>
</dbReference>
<dbReference type="PROSITE" id="PS00614">
    <property type="entry name" value="IGPS"/>
    <property type="match status" value="1"/>
</dbReference>
<evidence type="ECO:0000255" key="1">
    <source>
        <dbReference type="HAMAP-Rule" id="MF_00134"/>
    </source>
</evidence>
<sequence>MSVPTVLENILARKFQEVAERSARVSLSELESLAKAADAPRGFAQALLAQAKKKQPAVIAEIKKASPSKGVIRENFVPADIAKSYEKGGATCLSVLTDIDYFQGADAYLQQARVACSLPVIRKDFMIDPYQIVEARALGADCVLLIVSALDDVKMAELASVAKDVGLDVLVEVHDGDELERALKTLDTPLVGVNNRNLHTFDVSLETTLDLLPRIPRDRLVITESGILNRADVELMEISDVYAFLVGEAFMRAENPGIELQRLFFPERGVPVSGSTLD</sequence>
<reference key="1">
    <citation type="journal article" date="2009" name="Genome Biol.">
        <title>Genomic and genetic analyses of diversity and plant interactions of Pseudomonas fluorescens.</title>
        <authorList>
            <person name="Silby M.W."/>
            <person name="Cerdeno-Tarraga A.M."/>
            <person name="Vernikos G.S."/>
            <person name="Giddens S.R."/>
            <person name="Jackson R.W."/>
            <person name="Preston G.M."/>
            <person name="Zhang X.-X."/>
            <person name="Moon C.D."/>
            <person name="Gehrig S.M."/>
            <person name="Godfrey S.A.C."/>
            <person name="Knight C.G."/>
            <person name="Malone J.G."/>
            <person name="Robinson Z."/>
            <person name="Spiers A.J."/>
            <person name="Harris S."/>
            <person name="Challis G.L."/>
            <person name="Yaxley A.M."/>
            <person name="Harris D."/>
            <person name="Seeger K."/>
            <person name="Murphy L."/>
            <person name="Rutter S."/>
            <person name="Squares R."/>
            <person name="Quail M.A."/>
            <person name="Saunders E."/>
            <person name="Mavromatis K."/>
            <person name="Brettin T.S."/>
            <person name="Bentley S.D."/>
            <person name="Hothersall J."/>
            <person name="Stephens E."/>
            <person name="Thomas C.M."/>
            <person name="Parkhill J."/>
            <person name="Levy S.B."/>
            <person name="Rainey P.B."/>
            <person name="Thomson N.R."/>
        </authorList>
    </citation>
    <scope>NUCLEOTIDE SEQUENCE [LARGE SCALE GENOMIC DNA]</scope>
    <source>
        <strain>Pf0-1</strain>
    </source>
</reference>
<accession>Q3K5V4</accession>
<gene>
    <name evidence="1" type="primary">trpC</name>
    <name type="ordered locus">Pfl01_5113</name>
</gene>